<organism>
    <name type="scientific">Bacillus cereus (strain ATCC 10987 / NRS 248)</name>
    <dbReference type="NCBI Taxonomy" id="222523"/>
    <lineage>
        <taxon>Bacteria</taxon>
        <taxon>Bacillati</taxon>
        <taxon>Bacillota</taxon>
        <taxon>Bacilli</taxon>
        <taxon>Bacillales</taxon>
        <taxon>Bacillaceae</taxon>
        <taxon>Bacillus</taxon>
        <taxon>Bacillus cereus group</taxon>
    </lineage>
</organism>
<dbReference type="EC" id="6.3.5.7" evidence="1"/>
<dbReference type="EMBL" id="AE017194">
    <property type="protein sequence ID" value="AAS39286.1"/>
    <property type="molecule type" value="Genomic_DNA"/>
</dbReference>
<dbReference type="SMR" id="Q73EK8"/>
<dbReference type="KEGG" id="bca:BCE_0350"/>
<dbReference type="HOGENOM" id="CLU_009600_0_3_9"/>
<dbReference type="Proteomes" id="UP000002527">
    <property type="component" value="Chromosome"/>
</dbReference>
<dbReference type="GO" id="GO:0030956">
    <property type="term" value="C:glutamyl-tRNA(Gln) amidotransferase complex"/>
    <property type="evidence" value="ECO:0007669"/>
    <property type="project" value="InterPro"/>
</dbReference>
<dbReference type="GO" id="GO:0005524">
    <property type="term" value="F:ATP binding"/>
    <property type="evidence" value="ECO:0007669"/>
    <property type="project" value="UniProtKB-KW"/>
</dbReference>
<dbReference type="GO" id="GO:0050567">
    <property type="term" value="F:glutaminyl-tRNA synthase (glutamine-hydrolyzing) activity"/>
    <property type="evidence" value="ECO:0007669"/>
    <property type="project" value="UniProtKB-UniRule"/>
</dbReference>
<dbReference type="GO" id="GO:0006412">
    <property type="term" value="P:translation"/>
    <property type="evidence" value="ECO:0007669"/>
    <property type="project" value="UniProtKB-UniRule"/>
</dbReference>
<dbReference type="Gene3D" id="3.90.1300.10">
    <property type="entry name" value="Amidase signature (AS) domain"/>
    <property type="match status" value="1"/>
</dbReference>
<dbReference type="HAMAP" id="MF_00120">
    <property type="entry name" value="GatA"/>
    <property type="match status" value="1"/>
</dbReference>
<dbReference type="InterPro" id="IPR000120">
    <property type="entry name" value="Amidase"/>
</dbReference>
<dbReference type="InterPro" id="IPR020556">
    <property type="entry name" value="Amidase_CS"/>
</dbReference>
<dbReference type="InterPro" id="IPR023631">
    <property type="entry name" value="Amidase_dom"/>
</dbReference>
<dbReference type="InterPro" id="IPR036928">
    <property type="entry name" value="AS_sf"/>
</dbReference>
<dbReference type="InterPro" id="IPR004412">
    <property type="entry name" value="GatA"/>
</dbReference>
<dbReference type="NCBIfam" id="TIGR00132">
    <property type="entry name" value="gatA"/>
    <property type="match status" value="1"/>
</dbReference>
<dbReference type="PANTHER" id="PTHR11895:SF151">
    <property type="entry name" value="GLUTAMYL-TRNA(GLN) AMIDOTRANSFERASE SUBUNIT A"/>
    <property type="match status" value="1"/>
</dbReference>
<dbReference type="PANTHER" id="PTHR11895">
    <property type="entry name" value="TRANSAMIDASE"/>
    <property type="match status" value="1"/>
</dbReference>
<dbReference type="Pfam" id="PF01425">
    <property type="entry name" value="Amidase"/>
    <property type="match status" value="1"/>
</dbReference>
<dbReference type="SUPFAM" id="SSF75304">
    <property type="entry name" value="Amidase signature (AS) enzymes"/>
    <property type="match status" value="1"/>
</dbReference>
<dbReference type="PROSITE" id="PS00571">
    <property type="entry name" value="AMIDASES"/>
    <property type="match status" value="1"/>
</dbReference>
<evidence type="ECO:0000255" key="1">
    <source>
        <dbReference type="HAMAP-Rule" id="MF_00120"/>
    </source>
</evidence>
<sequence length="485" mass="52313">MSLFDHSVSELHKKLNNKEISVTDLVEESYKRIADVEDNVKAFLTLDEENARAKAKELDAKIGAEDNGLLFGMPIGVKDNIVTNGLRTTCASKMLANFDPIYDATVVQKLKAADTITIGKLNMDEFAMGSSNENSGFYATKNPWNLDYVPGGSSGGSAAAVAAGEVLFSLGSDTGGSIRQPAAYCGVVGLKPTYGRVSRYGLVAFASSLDQIGPITRTVEDNAYLLQAISGLDRMDATSANVEVGNYLAGLTGDVKGLRIAVPKEYLGEGVGEEARESVLAALKVLEGMGATWEEVSLPHSKYALATYYLLSSSEASANLSRFDGVRYGVRSDNVNNLMDLYKNTRSEGFGDEVKRRIMLGTFALSSGYYDAYYKKAQQVRTLIKNDFENVFANYDVIIGPTTPTPAFKVGEKVDDPMTMYANDILTIPVNLAGVPAISVPCGFGANNMPLGLQIIGKHFDEATIYRVAHAFEQATDHHTKKASL</sequence>
<feature type="chain" id="PRO_0000241068" description="Glutamyl-tRNA(Gln) amidotransferase subunit A">
    <location>
        <begin position="1"/>
        <end position="485"/>
    </location>
</feature>
<feature type="active site" description="Charge relay system" evidence="1">
    <location>
        <position position="78"/>
    </location>
</feature>
<feature type="active site" description="Charge relay system" evidence="1">
    <location>
        <position position="153"/>
    </location>
</feature>
<feature type="active site" description="Acyl-ester intermediate" evidence="1">
    <location>
        <position position="177"/>
    </location>
</feature>
<gene>
    <name evidence="1" type="primary">gatA</name>
    <name type="ordered locus">BCE_0350</name>
</gene>
<accession>Q73EK8</accession>
<comment type="function">
    <text evidence="1">Allows the formation of correctly charged Gln-tRNA(Gln) through the transamidation of misacylated Glu-tRNA(Gln) in organisms which lack glutaminyl-tRNA synthetase. The reaction takes place in the presence of glutamine and ATP through an activated gamma-phospho-Glu-tRNA(Gln).</text>
</comment>
<comment type="catalytic activity">
    <reaction evidence="1">
        <text>L-glutamyl-tRNA(Gln) + L-glutamine + ATP + H2O = L-glutaminyl-tRNA(Gln) + L-glutamate + ADP + phosphate + H(+)</text>
        <dbReference type="Rhea" id="RHEA:17521"/>
        <dbReference type="Rhea" id="RHEA-COMP:9681"/>
        <dbReference type="Rhea" id="RHEA-COMP:9684"/>
        <dbReference type="ChEBI" id="CHEBI:15377"/>
        <dbReference type="ChEBI" id="CHEBI:15378"/>
        <dbReference type="ChEBI" id="CHEBI:29985"/>
        <dbReference type="ChEBI" id="CHEBI:30616"/>
        <dbReference type="ChEBI" id="CHEBI:43474"/>
        <dbReference type="ChEBI" id="CHEBI:58359"/>
        <dbReference type="ChEBI" id="CHEBI:78520"/>
        <dbReference type="ChEBI" id="CHEBI:78521"/>
        <dbReference type="ChEBI" id="CHEBI:456216"/>
        <dbReference type="EC" id="6.3.5.7"/>
    </reaction>
</comment>
<comment type="subunit">
    <text evidence="1">Heterotrimer of A, B and C subunits.</text>
</comment>
<comment type="similarity">
    <text evidence="1">Belongs to the amidase family. GatA subfamily.</text>
</comment>
<proteinExistence type="inferred from homology"/>
<name>GATA_BACC1</name>
<keyword id="KW-0067">ATP-binding</keyword>
<keyword id="KW-0436">Ligase</keyword>
<keyword id="KW-0547">Nucleotide-binding</keyword>
<keyword id="KW-0648">Protein biosynthesis</keyword>
<protein>
    <recommendedName>
        <fullName evidence="1">Glutamyl-tRNA(Gln) amidotransferase subunit A</fullName>
        <shortName evidence="1">Glu-ADT subunit A</shortName>
        <ecNumber evidence="1">6.3.5.7</ecNumber>
    </recommendedName>
</protein>
<reference key="1">
    <citation type="journal article" date="2004" name="Nucleic Acids Res.">
        <title>The genome sequence of Bacillus cereus ATCC 10987 reveals metabolic adaptations and a large plasmid related to Bacillus anthracis pXO1.</title>
        <authorList>
            <person name="Rasko D.A."/>
            <person name="Ravel J."/>
            <person name="Oekstad O.A."/>
            <person name="Helgason E."/>
            <person name="Cer R.Z."/>
            <person name="Jiang L."/>
            <person name="Shores K.A."/>
            <person name="Fouts D.E."/>
            <person name="Tourasse N.J."/>
            <person name="Angiuoli S.V."/>
            <person name="Kolonay J.F."/>
            <person name="Nelson W.C."/>
            <person name="Kolstoe A.-B."/>
            <person name="Fraser C.M."/>
            <person name="Read T.D."/>
        </authorList>
    </citation>
    <scope>NUCLEOTIDE SEQUENCE [LARGE SCALE GENOMIC DNA]</scope>
    <source>
        <strain>ATCC 10987 / NRS 248</strain>
    </source>
</reference>